<proteinExistence type="evidence at protein level"/>
<sequence>MLRARPEALMLLGALLTGSLGPSGNQDALSLPWEVQRYDGWFNNLRHHERGAVGCRLQRRVPANYADGVYQALEEPQLPNPRRLSNAATRGIAGLPSLHNRTVLGVFFGYHVLSDVVSVETPGCPAEFLNIRIPPGDPVFDPDQRGDVVLPFQRSRWDPETGRSPSNPRDLANQVTGWLDGSAIYGSSHSWSDALRSFSGGQLASGPDPAFPRDSQNPLLMWAAPDPATGQNGPRGLYAFGAERGNREPFLQALGLLWFRYHNLWAQRLARQHPDWEDEELFQHARKRVIATYQNIAVYEWLPSFLQKTLPEYTGYRPFLDPSISPEFVVASEQFFSTMVPPGVYMRNASCHFRKVLNKGFQSSQALRVCNNYWIRENPNLNSTQEVNELLLGMASQISELEDNIVVEDLRDYWPGPGKFSRTDYVASSIQRGRDMGLPSYSQALLAFGLDIPRNWSDLNPNVDPQVLEATAALYNQDLSQLELLLGGLLESHGDPGPLFSAIVLDQFVRLRDGDRYWFENTRNGLFSKKEIEDIRNTTLRDVLVAVINIDPSALQPNVFVWHKGAPCPQPKQLTTDGLPQCAPLTVLDFFEGSSPGFAITIIALCCLPLVSLLLSGVVAYFRGREHKKLQKKLKESVKKEAAKDGVPAMEWPGPKERSSPIIIQLLSDRCLQVLNRHLTVLRVVQLQPLQQVNLILSNNRGCRTLLLKIPKEYDLVLLFSSEEERGAFVQQLWDFCVRWALGLHVAEMSEKELFRKAVTKQQRERILEIFFRHLFAQVLDINQADAGTLPLDSSQKVREALTCELSRAEFAESLGLKPQDMFVESMFSLADKDGNGYLSFREFLDILVVFMKGSPEDKSRLMFTMYDLDENGFLSKDEFFTMMRSFIEISNNCLSKAQLAEVVESMFRESGFQDKEELTWEDFHFMLRDHDSELRFTQLCVKGGGGGGNGIRDIFKQNISCRVSFITRTPGERSHPQGLGPPAPEAPELGGPGLKKRFGKKAAVPTPRLYTEALQEKMQRGFLAQKLQQYKRFVENYRRHIVCVAIFSAICVGVFADRAYYYGFASPPSDIAQTTLVGIILSRGTAASVSFMFSYILLTMCRNLITFLRETFLNRYVPFDAAVDFHRWIAMAAVVLAILHSAGHAVNVYIFSVSPLSLLACIFPNVFVNDGSKLPQKFYWWFFQTVPGMTGVLLLLVLAIMYVFASHHFRRRSFRGFWLTHHLYILLYALLIIHGSYALIQLPTFHIYFLVPAIIYGGDKLVSLSRKKVEISVVKAELLPSGVTYLQFQRPQGFEYKSGQWVRIACLALGTTEYHPFTLTSAPHEDTLSLHIRAVGPWTTRLREIYSSPKGNGCAGYPKLYLDGPFGEGHQEWHKFEVSVLVGGGIGVTPFASILKDLVFKSSLGSQMLCKKIYFIWVTRTQRQFEWLADIIQEVEENDHQDLVSVHIYVTQLAEKFDLRTTMLYICERHFQKVLNRSLFTGLRSITHFGRPPFEPFFNSLQEVHPQVRKIGVFSCGPPGMTKNVEKACQLVNRQDRAHFMHHYENF</sequence>
<feature type="signal peptide" evidence="2">
    <location>
        <begin position="1"/>
        <end position="25"/>
    </location>
</feature>
<feature type="chain" id="PRO_0000223349" description="Dual oxidase 2">
    <location>
        <begin position="26"/>
        <end position="1548"/>
    </location>
</feature>
<feature type="topological domain" description="Extracellular" evidence="2">
    <location>
        <begin position="26"/>
        <end position="601"/>
    </location>
</feature>
<feature type="transmembrane region" description="Helical" evidence="2">
    <location>
        <begin position="602"/>
        <end position="622"/>
    </location>
</feature>
<feature type="topological domain" description="Cytoplasmic" evidence="2">
    <location>
        <begin position="623"/>
        <end position="1041"/>
    </location>
</feature>
<feature type="transmembrane region" description="Helical" evidence="2">
    <location>
        <begin position="1042"/>
        <end position="1062"/>
    </location>
</feature>
<feature type="topological domain" description="Extracellular" evidence="2">
    <location>
        <begin position="1063"/>
        <end position="1076"/>
    </location>
</feature>
<feature type="transmembrane region" description="Helical" evidence="2">
    <location>
        <begin position="1077"/>
        <end position="1097"/>
    </location>
</feature>
<feature type="topological domain" description="Cytoplasmic" evidence="2">
    <location>
        <begin position="1098"/>
        <end position="1128"/>
    </location>
</feature>
<feature type="transmembrane region" description="Helical" evidence="2">
    <location>
        <begin position="1129"/>
        <end position="1151"/>
    </location>
</feature>
<feature type="topological domain" description="Extracellular" evidence="2">
    <location>
        <begin position="1152"/>
        <end position="1185"/>
    </location>
</feature>
<feature type="transmembrane region" description="Helical" evidence="2">
    <location>
        <begin position="1186"/>
        <end position="1206"/>
    </location>
</feature>
<feature type="topological domain" description="Cytoplasmic" evidence="2">
    <location>
        <begin position="1207"/>
        <end position="1223"/>
    </location>
</feature>
<feature type="transmembrane region" description="Helical" evidence="2">
    <location>
        <begin position="1224"/>
        <end position="1244"/>
    </location>
</feature>
<feature type="transmembrane region" description="Helical" evidence="2">
    <location>
        <begin position="1245"/>
        <end position="1265"/>
    </location>
</feature>
<feature type="topological domain" description="Cytoplasmic" evidence="2">
    <location>
        <begin position="1266"/>
        <end position="1548"/>
    </location>
</feature>
<feature type="domain" description="EF-hand 1" evidence="3">
    <location>
        <begin position="819"/>
        <end position="854"/>
    </location>
</feature>
<feature type="domain" description="EF-hand 2" evidence="3">
    <location>
        <begin position="855"/>
        <end position="890"/>
    </location>
</feature>
<feature type="domain" description="EF-hand 3" evidence="3">
    <location>
        <begin position="899"/>
        <end position="934"/>
    </location>
</feature>
<feature type="domain" description="Ferric oxidoreductase">
    <location>
        <begin position="1084"/>
        <end position="1266"/>
    </location>
</feature>
<feature type="domain" description="FAD-binding FR-type" evidence="4">
    <location>
        <begin position="1267"/>
        <end position="1373"/>
    </location>
</feature>
<feature type="region of interest" description="Peroxidase-like; mediates peroxidase activity" evidence="1">
    <location>
        <begin position="30"/>
        <end position="596"/>
    </location>
</feature>
<feature type="region of interest" description="Interaction with TXNDC11" evidence="1">
    <location>
        <begin position="960"/>
        <end position="1245"/>
    </location>
</feature>
<feature type="region of interest" description="Disordered" evidence="5">
    <location>
        <begin position="971"/>
        <end position="991"/>
    </location>
</feature>
<feature type="binding site" evidence="3">
    <location>
        <position position="832"/>
    </location>
    <ligand>
        <name>Ca(2+)</name>
        <dbReference type="ChEBI" id="CHEBI:29108"/>
        <label>1</label>
    </ligand>
</feature>
<feature type="binding site" evidence="3">
    <location>
        <position position="834"/>
    </location>
    <ligand>
        <name>Ca(2+)</name>
        <dbReference type="ChEBI" id="CHEBI:29108"/>
        <label>1</label>
    </ligand>
</feature>
<feature type="binding site" evidence="3">
    <location>
        <position position="836"/>
    </location>
    <ligand>
        <name>Ca(2+)</name>
        <dbReference type="ChEBI" id="CHEBI:29108"/>
        <label>1</label>
    </ligand>
</feature>
<feature type="binding site" evidence="3">
    <location>
        <position position="838"/>
    </location>
    <ligand>
        <name>Ca(2+)</name>
        <dbReference type="ChEBI" id="CHEBI:29108"/>
        <label>1</label>
    </ligand>
</feature>
<feature type="binding site" evidence="3">
    <location>
        <position position="843"/>
    </location>
    <ligand>
        <name>Ca(2+)</name>
        <dbReference type="ChEBI" id="CHEBI:29108"/>
        <label>1</label>
    </ligand>
</feature>
<feature type="binding site" evidence="3">
    <location>
        <position position="868"/>
    </location>
    <ligand>
        <name>Ca(2+)</name>
        <dbReference type="ChEBI" id="CHEBI:29108"/>
        <label>2</label>
    </ligand>
</feature>
<feature type="binding site" evidence="3">
    <location>
        <position position="870"/>
    </location>
    <ligand>
        <name>Ca(2+)</name>
        <dbReference type="ChEBI" id="CHEBI:29108"/>
        <label>2</label>
    </ligand>
</feature>
<feature type="binding site" evidence="3">
    <location>
        <position position="872"/>
    </location>
    <ligand>
        <name>Ca(2+)</name>
        <dbReference type="ChEBI" id="CHEBI:29108"/>
        <label>2</label>
    </ligand>
</feature>
<feature type="binding site" evidence="3">
    <location>
        <position position="879"/>
    </location>
    <ligand>
        <name>Ca(2+)</name>
        <dbReference type="ChEBI" id="CHEBI:29108"/>
        <label>2</label>
    </ligand>
</feature>
<feature type="glycosylation site" description="N-linked (GlcNAc...) asparagine" evidence="2">
    <location>
        <position position="100"/>
    </location>
</feature>
<feature type="glycosylation site" description="N-linked (GlcNAc...) asparagine" evidence="2">
    <location>
        <position position="348"/>
    </location>
</feature>
<feature type="glycosylation site" description="N-linked (GlcNAc...) asparagine" evidence="2">
    <location>
        <position position="382"/>
    </location>
</feature>
<feature type="glycosylation site" description="N-linked (GlcNAc...) asparagine" evidence="2">
    <location>
        <position position="455"/>
    </location>
</feature>
<feature type="glycosylation site" description="N-linked (GlcNAc...) asparagine" evidence="2">
    <location>
        <position position="537"/>
    </location>
</feature>
<feature type="disulfide bond" evidence="19">
    <location>
        <begin position="124"/>
        <end position="1162"/>
    </location>
</feature>
<feature type="disulfide bond" description="Interchain (with C-167 in DUOXA2)" evidence="19">
    <location>
        <position position="568"/>
    </location>
</feature>
<feature type="disulfide bond" description="Interchain (with C-233 in DUOXA2)" evidence="19">
    <location>
        <position position="582"/>
    </location>
</feature>
<feature type="sequence variant" id="VAR_025323" description="In TDH6." evidence="17">
    <original>Q</original>
    <variation>H</variation>
    <location>
        <position position="36"/>
    </location>
</feature>
<feature type="sequence variant" id="VAR_025324" description="In dbSNP:rs2001616." evidence="8">
    <original>P</original>
    <variation>L</variation>
    <location>
        <position position="138"/>
    </location>
</feature>
<feature type="sequence variant" id="VAR_025325" description="In TDH6; dbSNP:rs119472029." evidence="16">
    <original>R</original>
    <variation>W</variation>
    <location>
        <position position="376"/>
    </location>
</feature>
<feature type="sequence variant" id="VAR_061177" description="In dbSNP:rs57659670.">
    <original>H</original>
    <variation>R</variation>
    <location>
        <position position="678"/>
    </location>
</feature>
<feature type="sequence variant" id="VAR_047075" description="In dbSNP:rs269868." evidence="6 7 8">
    <original>S</original>
    <variation>L</variation>
    <location>
        <position position="1067"/>
    </location>
</feature>
<feature type="sequence variant" id="VAR_075549" description="Found in a patient with very early onset inflammatory bowel disease; uncertain significance; no effect on subcellular location; significantly reduced ROS generation, which may decrease resistance to infection by enteric pathogens, such as Escherichia coli; dbSNP:rs374410986." evidence="20">
    <original>R</original>
    <variation>C</variation>
    <location>
        <position position="1211"/>
    </location>
</feature>
<feature type="sequence variant" id="VAR_075550" description="Found in a patient with very early onset inflammatory bowel disease; uncertain significance; no effect on subcellular location; significantly reduced ROS generation, which may decrease resistance to infection by enteric pathogens, such as Escherichia coli; dbSNP:rs747720952." evidence="20">
    <original>R</original>
    <variation>C</variation>
    <location>
        <position position="1492"/>
    </location>
</feature>
<feature type="sequence variant" id="VAR_064619" description="In TDH6; the enzyme is non-functional; expressed at the cell surface of cells albeit at low level; dbSNP:rs368512412." evidence="18">
    <original>G</original>
    <variation>S</variation>
    <location>
        <position position="1518"/>
    </location>
</feature>
<feature type="sequence conflict" description="In Ref. 1; AAF73922 and 2; AAF78954." evidence="21" ref="1 2">
    <original>N</original>
    <variation>S</variation>
    <location>
        <position position="25"/>
    </location>
</feature>
<feature type="sequence conflict" description="In Ref. 2; AAF78954." evidence="21" ref="2">
    <original>A</original>
    <variation>V</variation>
    <location>
        <position position="984"/>
    </location>
</feature>
<evidence type="ECO:0000250" key="1"/>
<evidence type="ECO:0000255" key="2"/>
<evidence type="ECO:0000255" key="3">
    <source>
        <dbReference type="PROSITE-ProRule" id="PRU00448"/>
    </source>
</evidence>
<evidence type="ECO:0000255" key="4">
    <source>
        <dbReference type="PROSITE-ProRule" id="PRU00716"/>
    </source>
</evidence>
<evidence type="ECO:0000256" key="5">
    <source>
        <dbReference type="SAM" id="MobiDB-lite"/>
    </source>
</evidence>
<evidence type="ECO:0000269" key="6">
    <source>
    </source>
</evidence>
<evidence type="ECO:0000269" key="7">
    <source>
    </source>
</evidence>
<evidence type="ECO:0000269" key="8">
    <source>
    </source>
</evidence>
<evidence type="ECO:0000269" key="9">
    <source>
    </source>
</evidence>
<evidence type="ECO:0000269" key="10">
    <source>
    </source>
</evidence>
<evidence type="ECO:0000269" key="11">
    <source>
    </source>
</evidence>
<evidence type="ECO:0000269" key="12">
    <source>
    </source>
</evidence>
<evidence type="ECO:0000269" key="13">
    <source>
    </source>
</evidence>
<evidence type="ECO:0000269" key="14">
    <source>
    </source>
</evidence>
<evidence type="ECO:0000269" key="15">
    <source>
    </source>
</evidence>
<evidence type="ECO:0000269" key="16">
    <source>
    </source>
</evidence>
<evidence type="ECO:0000269" key="17">
    <source>
    </source>
</evidence>
<evidence type="ECO:0000269" key="18">
    <source>
    </source>
</evidence>
<evidence type="ECO:0000269" key="19">
    <source>
    </source>
</evidence>
<evidence type="ECO:0000269" key="20">
    <source>
    </source>
</evidence>
<evidence type="ECO:0000305" key="21"/>
<name>DUOX2_HUMAN</name>
<accession>Q9NRD8</accession>
<accession>A8MQ13</accession>
<accession>D2XI64</accession>
<accession>Q9NR02</accession>
<accession>Q9UHF9</accession>
<dbReference type="EC" id="1.11.1.-"/>
<dbReference type="EC" id="1.6.3.1"/>
<dbReference type="EMBL" id="AF230496">
    <property type="protein sequence ID" value="AAF73922.1"/>
    <property type="molecule type" value="mRNA"/>
</dbReference>
<dbReference type="EMBL" id="AF267981">
    <property type="protein sequence ID" value="AAF78954.1"/>
    <property type="molecule type" value="mRNA"/>
</dbReference>
<dbReference type="EMBL" id="AC091117">
    <property type="status" value="NOT_ANNOTATED_CDS"/>
    <property type="molecule type" value="Genomic_DNA"/>
</dbReference>
<dbReference type="EMBL" id="AF181972">
    <property type="protein sequence ID" value="AAF20055.1"/>
    <property type="molecule type" value="mRNA"/>
</dbReference>
<dbReference type="EMBL" id="GU174495">
    <property type="protein sequence ID" value="ADB22378.1"/>
    <property type="molecule type" value="Genomic_DNA"/>
</dbReference>
<dbReference type="CCDS" id="CCDS10117.1"/>
<dbReference type="RefSeq" id="NP_054799.4">
    <property type="nucleotide sequence ID" value="NM_014080.4"/>
</dbReference>
<dbReference type="SMR" id="Q9NRD8"/>
<dbReference type="BioGRID" id="119077">
    <property type="interactions" value="28"/>
</dbReference>
<dbReference type="ComplexPortal" id="CPX-8182">
    <property type="entry name" value="DUOX2-DUOXA2 dual oxidase complex"/>
</dbReference>
<dbReference type="CORUM" id="Q9NRD8"/>
<dbReference type="FunCoup" id="Q9NRD8">
    <property type="interactions" value="11"/>
</dbReference>
<dbReference type="IntAct" id="Q9NRD8">
    <property type="interactions" value="2"/>
</dbReference>
<dbReference type="STRING" id="9606.ENSP00000373691"/>
<dbReference type="BindingDB" id="Q9NRD8"/>
<dbReference type="ChEMBL" id="CHEMBL3293"/>
<dbReference type="GuidetoPHARMACOLOGY" id="2999"/>
<dbReference type="PeroxiBase" id="3338">
    <property type="entry name" value="HsDuOx02"/>
</dbReference>
<dbReference type="TCDB" id="5.B.1.1.7">
    <property type="family name" value="the phagocyte (gp91(phox)) nadph oxidase family"/>
</dbReference>
<dbReference type="GlyCosmos" id="Q9NRD8">
    <property type="glycosylation" value="5 sites, No reported glycans"/>
</dbReference>
<dbReference type="GlyGen" id="Q9NRD8">
    <property type="glycosylation" value="7 sites, 1 O-linked glycan (1 site)"/>
</dbReference>
<dbReference type="iPTMnet" id="Q9NRD8"/>
<dbReference type="PhosphoSitePlus" id="Q9NRD8"/>
<dbReference type="BioMuta" id="DUOX2"/>
<dbReference type="DMDM" id="296434485"/>
<dbReference type="jPOST" id="Q9NRD8"/>
<dbReference type="MassIVE" id="Q9NRD8"/>
<dbReference type="PaxDb" id="9606-ENSP00000475084"/>
<dbReference type="PeptideAtlas" id="Q9NRD8"/>
<dbReference type="ProteomicsDB" id="82340"/>
<dbReference type="Antibodypedia" id="24313">
    <property type="antibodies" value="170 antibodies from 21 providers"/>
</dbReference>
<dbReference type="DNASU" id="50506"/>
<dbReference type="Ensembl" id="ENST00000603300.1">
    <property type="protein sequence ID" value="ENSP00000475084.1"/>
    <property type="gene ID" value="ENSG00000140279.13"/>
</dbReference>
<dbReference type="GeneID" id="50506"/>
<dbReference type="KEGG" id="hsa:50506"/>
<dbReference type="UCSC" id="uc010bea.4">
    <property type="organism name" value="human"/>
</dbReference>
<dbReference type="AGR" id="HGNC:13273"/>
<dbReference type="CTD" id="50506"/>
<dbReference type="DisGeNET" id="50506"/>
<dbReference type="GeneCards" id="DUOX2"/>
<dbReference type="HGNC" id="HGNC:13273">
    <property type="gene designation" value="DUOX2"/>
</dbReference>
<dbReference type="HPA" id="ENSG00000140279">
    <property type="expression patterns" value="Tissue enhanced (gallbladder, thyroid gland, urinary bladder)"/>
</dbReference>
<dbReference type="MalaCards" id="DUOX2"/>
<dbReference type="MIM" id="606759">
    <property type="type" value="gene"/>
</dbReference>
<dbReference type="MIM" id="607200">
    <property type="type" value="phenotype"/>
</dbReference>
<dbReference type="neXtProt" id="NX_Q9NRD8"/>
<dbReference type="OpenTargets" id="ENSG00000140279"/>
<dbReference type="Orphanet" id="95716">
    <property type="disease" value="Familial thyroid dyshormonogenesis"/>
</dbReference>
<dbReference type="Orphanet" id="226316">
    <property type="disease" value="Genetic transient congenital hypothyroidism"/>
</dbReference>
<dbReference type="PharmGKB" id="PA27517"/>
<dbReference type="VEuPathDB" id="HostDB:ENSG00000140279"/>
<dbReference type="eggNOG" id="KOG0039">
    <property type="taxonomic scope" value="Eukaryota"/>
</dbReference>
<dbReference type="GeneTree" id="ENSGT00940000160291"/>
<dbReference type="InParanoid" id="Q9NRD8"/>
<dbReference type="OrthoDB" id="6019201at2759"/>
<dbReference type="PAN-GO" id="Q9NRD8">
    <property type="GO annotations" value="5 GO annotations based on evolutionary models"/>
</dbReference>
<dbReference type="PhylomeDB" id="Q9NRD8"/>
<dbReference type="TreeFam" id="TF105424"/>
<dbReference type="BRENDA" id="1.6.3.1">
    <property type="organism ID" value="2681"/>
</dbReference>
<dbReference type="PathwayCommons" id="Q9NRD8"/>
<dbReference type="Reactome" id="R-HSA-209968">
    <property type="pathway name" value="Thyroxine biosynthesis"/>
</dbReference>
<dbReference type="SABIO-RK" id="Q9NRD8"/>
<dbReference type="SignaLink" id="Q9NRD8"/>
<dbReference type="SIGNOR" id="Q9NRD8"/>
<dbReference type="UniPathway" id="UPA00194"/>
<dbReference type="BioGRID-ORCS" id="50506">
    <property type="hits" value="13 hits in 1149 CRISPR screens"/>
</dbReference>
<dbReference type="ChiTaRS" id="DUOX2">
    <property type="organism name" value="human"/>
</dbReference>
<dbReference type="GeneWiki" id="Dual_oxidase_2"/>
<dbReference type="GenomeRNAi" id="50506"/>
<dbReference type="Pharos" id="Q9NRD8">
    <property type="development level" value="Tchem"/>
</dbReference>
<dbReference type="PRO" id="PR:Q9NRD8"/>
<dbReference type="Proteomes" id="UP000005640">
    <property type="component" value="Chromosome 15"/>
</dbReference>
<dbReference type="RNAct" id="Q9NRD8">
    <property type="molecule type" value="protein"/>
</dbReference>
<dbReference type="Bgee" id="ENSG00000140279">
    <property type="expression patterns" value="Expressed in gall bladder and 130 other cell types or tissues"/>
</dbReference>
<dbReference type="ExpressionAtlas" id="Q9NRD8">
    <property type="expression patterns" value="baseline and differential"/>
</dbReference>
<dbReference type="GO" id="GO:0070161">
    <property type="term" value="C:anchoring junction"/>
    <property type="evidence" value="ECO:0007669"/>
    <property type="project" value="UniProtKB-SubCell"/>
</dbReference>
<dbReference type="GO" id="GO:0045177">
    <property type="term" value="C:apical part of cell"/>
    <property type="evidence" value="ECO:0000314"/>
    <property type="project" value="UniProtKB"/>
</dbReference>
<dbReference type="GO" id="GO:0016324">
    <property type="term" value="C:apical plasma membrane"/>
    <property type="evidence" value="ECO:0007669"/>
    <property type="project" value="UniProtKB-SubCell"/>
</dbReference>
<dbReference type="GO" id="GO:0031252">
    <property type="term" value="C:cell leading edge"/>
    <property type="evidence" value="ECO:0000316"/>
    <property type="project" value="UniProtKB"/>
</dbReference>
<dbReference type="GO" id="GO:0009986">
    <property type="term" value="C:cell surface"/>
    <property type="evidence" value="ECO:0000316"/>
    <property type="project" value="UniProtKB"/>
</dbReference>
<dbReference type="GO" id="GO:0005829">
    <property type="term" value="C:cytosol"/>
    <property type="evidence" value="ECO:0000314"/>
    <property type="project" value="UniProtKB"/>
</dbReference>
<dbReference type="GO" id="GO:0005783">
    <property type="term" value="C:endoplasmic reticulum"/>
    <property type="evidence" value="ECO:0000314"/>
    <property type="project" value="UniProtKB"/>
</dbReference>
<dbReference type="GO" id="GO:0070062">
    <property type="term" value="C:extracellular exosome"/>
    <property type="evidence" value="ECO:0007005"/>
    <property type="project" value="UniProtKB"/>
</dbReference>
<dbReference type="GO" id="GO:0043020">
    <property type="term" value="C:NADPH oxidase complex"/>
    <property type="evidence" value="ECO:0000318"/>
    <property type="project" value="GO_Central"/>
</dbReference>
<dbReference type="GO" id="GO:0005886">
    <property type="term" value="C:plasma membrane"/>
    <property type="evidence" value="ECO:0000314"/>
    <property type="project" value="UniProtKB"/>
</dbReference>
<dbReference type="GO" id="GO:0005509">
    <property type="term" value="F:calcium ion binding"/>
    <property type="evidence" value="ECO:0000314"/>
    <property type="project" value="UniProtKB"/>
</dbReference>
<dbReference type="GO" id="GO:0020037">
    <property type="term" value="F:heme binding"/>
    <property type="evidence" value="ECO:0007669"/>
    <property type="project" value="InterPro"/>
</dbReference>
<dbReference type="GO" id="GO:0016174">
    <property type="term" value="F:NAD(P)H oxidase H2O2-forming activity"/>
    <property type="evidence" value="ECO:0000314"/>
    <property type="project" value="UniProtKB"/>
</dbReference>
<dbReference type="GO" id="GO:0106293">
    <property type="term" value="F:NADH oxidase H202-forming activity"/>
    <property type="evidence" value="ECO:0007669"/>
    <property type="project" value="RHEA"/>
</dbReference>
<dbReference type="GO" id="GO:0106294">
    <property type="term" value="F:NADPH oxidase H202-forming activity"/>
    <property type="evidence" value="ECO:0007669"/>
    <property type="project" value="RHEA"/>
</dbReference>
<dbReference type="GO" id="GO:0004601">
    <property type="term" value="F:peroxidase activity"/>
    <property type="evidence" value="ECO:0007669"/>
    <property type="project" value="UniProtKB-KW"/>
</dbReference>
<dbReference type="GO" id="GO:0016175">
    <property type="term" value="F:superoxide-generating NAD(P)H oxidase activity"/>
    <property type="evidence" value="ECO:0000318"/>
    <property type="project" value="GO_Central"/>
</dbReference>
<dbReference type="GO" id="GO:0042335">
    <property type="term" value="P:cuticle development"/>
    <property type="evidence" value="ECO:0000250"/>
    <property type="project" value="UniProtKB"/>
</dbReference>
<dbReference type="GO" id="GO:0019221">
    <property type="term" value="P:cytokine-mediated signaling pathway"/>
    <property type="evidence" value="ECO:0000314"/>
    <property type="project" value="UniProtKB"/>
</dbReference>
<dbReference type="GO" id="GO:0006952">
    <property type="term" value="P:defense response"/>
    <property type="evidence" value="ECO:0000318"/>
    <property type="project" value="GO_Central"/>
</dbReference>
<dbReference type="GO" id="GO:0042446">
    <property type="term" value="P:hormone biosynthetic process"/>
    <property type="evidence" value="ECO:0007669"/>
    <property type="project" value="UniProtKB-KW"/>
</dbReference>
<dbReference type="GO" id="GO:0050665">
    <property type="term" value="P:hydrogen peroxide biosynthetic process"/>
    <property type="evidence" value="ECO:0000316"/>
    <property type="project" value="UniProtKB"/>
</dbReference>
<dbReference type="GO" id="GO:0042744">
    <property type="term" value="P:hydrogen peroxide catabolic process"/>
    <property type="evidence" value="ECO:0007669"/>
    <property type="project" value="UniProtKB-KW"/>
</dbReference>
<dbReference type="GO" id="GO:2000147">
    <property type="term" value="P:positive regulation of cell motility"/>
    <property type="evidence" value="ECO:0000316"/>
    <property type="project" value="UniProtKB"/>
</dbReference>
<dbReference type="GO" id="GO:0090303">
    <property type="term" value="P:positive regulation of wound healing"/>
    <property type="evidence" value="ECO:0000316"/>
    <property type="project" value="UniProtKB"/>
</dbReference>
<dbReference type="GO" id="GO:0051591">
    <property type="term" value="P:response to cAMP"/>
    <property type="evidence" value="ECO:0000314"/>
    <property type="project" value="UniProtKB"/>
</dbReference>
<dbReference type="GO" id="GO:0006979">
    <property type="term" value="P:response to oxidative stress"/>
    <property type="evidence" value="ECO:0007669"/>
    <property type="project" value="InterPro"/>
</dbReference>
<dbReference type="GO" id="GO:0009615">
    <property type="term" value="P:response to virus"/>
    <property type="evidence" value="ECO:0000314"/>
    <property type="project" value="UniProtKB"/>
</dbReference>
<dbReference type="GO" id="GO:0042554">
    <property type="term" value="P:superoxide anion generation"/>
    <property type="evidence" value="ECO:0000316"/>
    <property type="project" value="UniProtKB"/>
</dbReference>
<dbReference type="GO" id="GO:0006590">
    <property type="term" value="P:thyroid hormone generation"/>
    <property type="evidence" value="ECO:0000304"/>
    <property type="project" value="Reactome"/>
</dbReference>
<dbReference type="CDD" id="cd09820">
    <property type="entry name" value="dual_peroxidase_like"/>
    <property type="match status" value="1"/>
</dbReference>
<dbReference type="CDD" id="cd00051">
    <property type="entry name" value="EFh"/>
    <property type="match status" value="2"/>
</dbReference>
<dbReference type="CDD" id="cd06186">
    <property type="entry name" value="NOX_Duox_like_FAD_NADP"/>
    <property type="match status" value="1"/>
</dbReference>
<dbReference type="FunFam" id="2.40.30.10:FF:000043">
    <property type="entry name" value="dual oxidase 1"/>
    <property type="match status" value="1"/>
</dbReference>
<dbReference type="FunFam" id="1.10.640.10:FF:000004">
    <property type="entry name" value="Dual oxidase 2"/>
    <property type="match status" value="1"/>
</dbReference>
<dbReference type="FunFam" id="3.40.50.80:FF:000006">
    <property type="entry name" value="Dual oxidase 2"/>
    <property type="match status" value="1"/>
</dbReference>
<dbReference type="FunFam" id="1.10.238.10:FF:000095">
    <property type="entry name" value="dual oxidase 2"/>
    <property type="match status" value="1"/>
</dbReference>
<dbReference type="Gene3D" id="1.10.238.10">
    <property type="entry name" value="EF-hand"/>
    <property type="match status" value="1"/>
</dbReference>
<dbReference type="Gene3D" id="1.10.640.10">
    <property type="entry name" value="Haem peroxidase domain superfamily, animal type"/>
    <property type="match status" value="1"/>
</dbReference>
<dbReference type="Gene3D" id="3.40.50.80">
    <property type="entry name" value="Nucleotide-binding domain of ferredoxin-NADP reductase (FNR) module"/>
    <property type="match status" value="1"/>
</dbReference>
<dbReference type="Gene3D" id="2.40.30.10">
    <property type="entry name" value="Translation factors"/>
    <property type="match status" value="1"/>
</dbReference>
<dbReference type="InterPro" id="IPR034821">
    <property type="entry name" value="DUOX_peroxidase"/>
</dbReference>
<dbReference type="InterPro" id="IPR011992">
    <property type="entry name" value="EF-hand-dom_pair"/>
</dbReference>
<dbReference type="InterPro" id="IPR018247">
    <property type="entry name" value="EF_Hand_1_Ca_BS"/>
</dbReference>
<dbReference type="InterPro" id="IPR002048">
    <property type="entry name" value="EF_hand_dom"/>
</dbReference>
<dbReference type="InterPro" id="IPR013112">
    <property type="entry name" value="FAD-bd_8"/>
</dbReference>
<dbReference type="InterPro" id="IPR017927">
    <property type="entry name" value="FAD-bd_FR_type"/>
</dbReference>
<dbReference type="InterPro" id="IPR013130">
    <property type="entry name" value="Fe3_Rdtase_TM_dom"/>
</dbReference>
<dbReference type="InterPro" id="IPR013121">
    <property type="entry name" value="Fe_red_NAD-bd_6"/>
</dbReference>
<dbReference type="InterPro" id="IPR039261">
    <property type="entry name" value="FNR_nucleotide-bd"/>
</dbReference>
<dbReference type="InterPro" id="IPR019791">
    <property type="entry name" value="Haem_peroxidase_animal"/>
</dbReference>
<dbReference type="InterPro" id="IPR010255">
    <property type="entry name" value="Haem_peroxidase_sf"/>
</dbReference>
<dbReference type="InterPro" id="IPR037120">
    <property type="entry name" value="Haem_peroxidase_sf_animal"/>
</dbReference>
<dbReference type="InterPro" id="IPR050369">
    <property type="entry name" value="RBOH/FRE"/>
</dbReference>
<dbReference type="InterPro" id="IPR017938">
    <property type="entry name" value="Riboflavin_synthase-like_b-brl"/>
</dbReference>
<dbReference type="PANTHER" id="PTHR11972:SF67">
    <property type="entry name" value="DUAL OXIDASE 2"/>
    <property type="match status" value="1"/>
</dbReference>
<dbReference type="PANTHER" id="PTHR11972">
    <property type="entry name" value="NADPH OXIDASE"/>
    <property type="match status" value="1"/>
</dbReference>
<dbReference type="Pfam" id="PF03098">
    <property type="entry name" value="An_peroxidase"/>
    <property type="match status" value="1"/>
</dbReference>
<dbReference type="Pfam" id="PF00036">
    <property type="entry name" value="EF-hand_1"/>
    <property type="match status" value="1"/>
</dbReference>
<dbReference type="Pfam" id="PF13833">
    <property type="entry name" value="EF-hand_8"/>
    <property type="match status" value="1"/>
</dbReference>
<dbReference type="Pfam" id="PF08022">
    <property type="entry name" value="FAD_binding_8"/>
    <property type="match status" value="1"/>
</dbReference>
<dbReference type="Pfam" id="PF01794">
    <property type="entry name" value="Ferric_reduct"/>
    <property type="match status" value="1"/>
</dbReference>
<dbReference type="Pfam" id="PF08030">
    <property type="entry name" value="NAD_binding_6"/>
    <property type="match status" value="1"/>
</dbReference>
<dbReference type="PRINTS" id="PR00457">
    <property type="entry name" value="ANPEROXIDASE"/>
</dbReference>
<dbReference type="SFLD" id="SFLDS00052">
    <property type="entry name" value="Ferric_Reductase_Domain"/>
    <property type="match status" value="1"/>
</dbReference>
<dbReference type="SFLD" id="SFLDG01168">
    <property type="entry name" value="Ferric_reductase_subgroup_(FRE"/>
    <property type="match status" value="1"/>
</dbReference>
<dbReference type="SFLD" id="SFLDG01169">
    <property type="entry name" value="NADPH_oxidase_subgroup_(NOX)"/>
    <property type="match status" value="1"/>
</dbReference>
<dbReference type="SMART" id="SM00054">
    <property type="entry name" value="EFh"/>
    <property type="match status" value="2"/>
</dbReference>
<dbReference type="SUPFAM" id="SSF47473">
    <property type="entry name" value="EF-hand"/>
    <property type="match status" value="1"/>
</dbReference>
<dbReference type="SUPFAM" id="SSF52343">
    <property type="entry name" value="Ferredoxin reductase-like, C-terminal NADP-linked domain"/>
    <property type="match status" value="1"/>
</dbReference>
<dbReference type="SUPFAM" id="SSF48113">
    <property type="entry name" value="Heme-dependent peroxidases"/>
    <property type="match status" value="1"/>
</dbReference>
<dbReference type="SUPFAM" id="SSF63380">
    <property type="entry name" value="Riboflavin synthase domain-like"/>
    <property type="match status" value="1"/>
</dbReference>
<dbReference type="PROSITE" id="PS00018">
    <property type="entry name" value="EF_HAND_1"/>
    <property type="match status" value="2"/>
</dbReference>
<dbReference type="PROSITE" id="PS50222">
    <property type="entry name" value="EF_HAND_2"/>
    <property type="match status" value="3"/>
</dbReference>
<dbReference type="PROSITE" id="PS51384">
    <property type="entry name" value="FAD_FR"/>
    <property type="match status" value="1"/>
</dbReference>
<dbReference type="PROSITE" id="PS50292">
    <property type="entry name" value="PEROXIDASE_3"/>
    <property type="match status" value="1"/>
</dbReference>
<keyword id="KW-0106">Calcium</keyword>
<keyword id="KW-0965">Cell junction</keyword>
<keyword id="KW-1003">Cell membrane</keyword>
<keyword id="KW-0984">Congenital hypothyroidism</keyword>
<keyword id="KW-0225">Disease variant</keyword>
<keyword id="KW-1015">Disulfide bond</keyword>
<keyword id="KW-0274">FAD</keyword>
<keyword id="KW-0285">Flavoprotein</keyword>
<keyword id="KW-0325">Glycoprotein</keyword>
<keyword id="KW-0376">Hydrogen peroxide</keyword>
<keyword id="KW-0472">Membrane</keyword>
<keyword id="KW-0479">Metal-binding</keyword>
<keyword id="KW-0521">NADP</keyword>
<keyword id="KW-0560">Oxidoreductase</keyword>
<keyword id="KW-0575">Peroxidase</keyword>
<keyword id="KW-1267">Proteomics identification</keyword>
<keyword id="KW-1185">Reference proteome</keyword>
<keyword id="KW-0677">Repeat</keyword>
<keyword id="KW-0732">Signal</keyword>
<keyword id="KW-0893">Thyroid hormones biosynthesis</keyword>
<keyword id="KW-0812">Transmembrane</keyword>
<keyword id="KW-1133">Transmembrane helix</keyword>
<reference key="1">
    <citation type="journal article" date="2000" name="J. Biol. Chem.">
        <title>Cloning of two human thyroid cDNAs encoding new members of the NADPH oxidase family.</title>
        <authorList>
            <person name="De Deken X."/>
            <person name="Wang D."/>
            <person name="Many M.-C."/>
            <person name="Costagliola S."/>
            <person name="Libert F."/>
            <person name="Vassart G."/>
            <person name="Dumont J.E."/>
            <person name="Miot F."/>
        </authorList>
    </citation>
    <scope>NUCLEOTIDE SEQUENCE [MRNA]</scope>
    <scope>INDUCTION</scope>
    <scope>TISSUE SPECIFICITY</scope>
    <scope>VARIANT LEU-1067</scope>
    <source>
        <tissue>Thyroid</tissue>
    </source>
</reference>
<reference key="2">
    <citation type="journal article" date="2001" name="J. Cell Biol.">
        <title>Tyrosine cross-linking of extracellular matrix is catalyzed by Duox, a multidomain oxidase/peroxidase with homology to the phagocyte oxidase subunit gp91phox.</title>
        <authorList>
            <person name="Edens W.A."/>
            <person name="Sharling L."/>
            <person name="Cheng G."/>
            <person name="Shapira R."/>
            <person name="Kinkade J.M."/>
            <person name="Lee T."/>
            <person name="Edens H.A."/>
            <person name="Tang X."/>
            <person name="Sullards C."/>
            <person name="Flaherty D.B."/>
            <person name="Benian G.M."/>
            <person name="Lambeth J.D."/>
        </authorList>
    </citation>
    <scope>NUCLEOTIDE SEQUENCE [MRNA]</scope>
    <scope>VARIANTS LEU-138 AND LEU-1067</scope>
    <scope>DEVELOPMENTAL STAGE</scope>
    <scope>TISSUE SPECIFICITY</scope>
    <source>
        <tissue>Pancreas</tissue>
        <tissue>Thyroid</tissue>
    </source>
</reference>
<reference key="3">
    <citation type="journal article" date="2006" name="Nature">
        <title>Analysis of the DNA sequence and duplication history of human chromosome 15.</title>
        <authorList>
            <person name="Zody M.C."/>
            <person name="Garber M."/>
            <person name="Sharpe T."/>
            <person name="Young S.K."/>
            <person name="Rowen L."/>
            <person name="O'Neill K."/>
            <person name="Whittaker C.A."/>
            <person name="Kamal M."/>
            <person name="Chang J.L."/>
            <person name="Cuomo C.A."/>
            <person name="Dewar K."/>
            <person name="FitzGerald M.G."/>
            <person name="Kodira C.D."/>
            <person name="Madan A."/>
            <person name="Qin S."/>
            <person name="Yang X."/>
            <person name="Abbasi N."/>
            <person name="Abouelleil A."/>
            <person name="Arachchi H.M."/>
            <person name="Baradarani L."/>
            <person name="Birditt B."/>
            <person name="Bloom S."/>
            <person name="Bloom T."/>
            <person name="Borowsky M.L."/>
            <person name="Burke J."/>
            <person name="Butler J."/>
            <person name="Cook A."/>
            <person name="DeArellano K."/>
            <person name="DeCaprio D."/>
            <person name="Dorris L. III"/>
            <person name="Dors M."/>
            <person name="Eichler E.E."/>
            <person name="Engels R."/>
            <person name="Fahey J."/>
            <person name="Fleetwood P."/>
            <person name="Friedman C."/>
            <person name="Gearin G."/>
            <person name="Hall J.L."/>
            <person name="Hensley G."/>
            <person name="Johnson E."/>
            <person name="Jones C."/>
            <person name="Kamat A."/>
            <person name="Kaur A."/>
            <person name="Locke D.P."/>
            <person name="Madan A."/>
            <person name="Munson G."/>
            <person name="Jaffe D.B."/>
            <person name="Lui A."/>
            <person name="Macdonald P."/>
            <person name="Mauceli E."/>
            <person name="Naylor J.W."/>
            <person name="Nesbitt R."/>
            <person name="Nicol R."/>
            <person name="O'Leary S.B."/>
            <person name="Ratcliffe A."/>
            <person name="Rounsley S."/>
            <person name="She X."/>
            <person name="Sneddon K.M.B."/>
            <person name="Stewart S."/>
            <person name="Sougnez C."/>
            <person name="Stone S.M."/>
            <person name="Topham K."/>
            <person name="Vincent D."/>
            <person name="Wang S."/>
            <person name="Zimmer A.R."/>
            <person name="Birren B.W."/>
            <person name="Hood L."/>
            <person name="Lander E.S."/>
            <person name="Nusbaum C."/>
        </authorList>
    </citation>
    <scope>NUCLEOTIDE SEQUENCE [LARGE SCALE GENOMIC DNA]</scope>
</reference>
<reference key="4">
    <citation type="journal article" date="1999" name="J. Biol. Chem.">
        <title>Purification of a novel flavoprotein involved in the thyroid NADPH oxidase. Cloning of the porcine and human cDNAs.</title>
        <authorList>
            <person name="Dupuy C."/>
            <person name="Ohayon R."/>
            <person name="Valent A."/>
            <person name="Noel-Hudson M.-S."/>
            <person name="Deme D."/>
            <person name="Virion A."/>
        </authorList>
    </citation>
    <scope>NUCLEOTIDE SEQUENCE [MRNA] OF 339-1548</scope>
    <scope>VARIANT LEU-1067</scope>
    <source>
        <tissue>Thyroid</tissue>
    </source>
</reference>
<reference key="5">
    <citation type="journal article" date="2010" name="Hum. Mutat.">
        <title>Compound heterozygosity for a novel hemizygous missense mutation and a partial deletion affecting the catalytic core of the H2O2-generating enzyme DUOX2 associated with transient congenital hypothyroidism.</title>
        <authorList>
            <person name="Hoste C."/>
            <person name="Rigutto S."/>
            <person name="Van Vliet G."/>
            <person name="Miot F."/>
            <person name="De Deken X."/>
        </authorList>
    </citation>
    <scope>NUCLEOTIDE SEQUENCE [GENOMIC DNA] OF 1509-1548</scope>
    <scope>VARIANT TDH6 SER-1518</scope>
    <scope>CHARACTERIZATION OF VARIANT TDH6 SER-1518</scope>
</reference>
<reference key="6">
    <citation type="journal article" date="2002" name="Exp. Cell Res.">
        <title>Characterization of ThOX proteins as components of the thyroid H(2)O(2)-generating system.</title>
        <authorList>
            <person name="De Deken X."/>
            <person name="Wang D."/>
            <person name="Dumont J.E."/>
            <person name="Miot F."/>
        </authorList>
    </citation>
    <scope>GLYCOSYLATION</scope>
</reference>
<reference key="7">
    <citation type="journal article" date="2002" name="N. Engl. J. Med.">
        <title>Inactivating mutations in the gene for thyroid oxidase 2 (THOX2) and congenital hypothyroidism.</title>
        <authorList>
            <person name="Moreno J.C."/>
            <person name="Bikker H."/>
            <person name="Kempers M.J.E."/>
            <person name="van Trotsenburg A.S."/>
            <person name="Baas F."/>
            <person name="de Vijlder J.J.M."/>
            <person name="Vulsma T."/>
            <person name="Ris-Stalpers C."/>
        </authorList>
    </citation>
    <scope>INVOLVEMENT IN TDH6</scope>
</reference>
<reference key="8">
    <citation type="journal article" date="2003" name="FASEB J.">
        <title>Dual oxidases represent novel hydrogen peroxide sources supporting mucosal surface host defense.</title>
        <authorList>
            <person name="Geiszt M."/>
            <person name="Witta J."/>
            <person name="Baffi J."/>
            <person name="Lekstrom K."/>
            <person name="Leto T.L."/>
        </authorList>
    </citation>
    <scope>FUNCTION</scope>
    <scope>TISSUE SPECIFICITY</scope>
</reference>
<reference key="9">
    <citation type="journal article" date="2004" name="J. Biol. Chem.">
        <title>NADPH oxidase-dependent acid production in airway epithelial cells.</title>
        <authorList>
            <person name="Schwarzer C."/>
            <person name="Machen T.E."/>
            <person name="Illek B."/>
            <person name="Fischer H."/>
        </authorList>
    </citation>
    <scope>TISSUE SPECIFICITY</scope>
</reference>
<reference key="10">
    <citation type="journal article" date="2005" name="Am. J. Physiol.">
        <title>Dual oxidase2 is expressed all along the digestive tract.</title>
        <authorList>
            <person name="Ameziane-El-Hassani R."/>
            <person name="Benfares N."/>
            <person name="Caillou B."/>
            <person name="Talbot M."/>
            <person name="Sabourin J.-C."/>
            <person name="Belotte V."/>
            <person name="Morand S."/>
            <person name="Gnidehou S."/>
            <person name="Agnandji D."/>
            <person name="Ohayon R."/>
            <person name="Kaniewski J."/>
            <person name="Noel-Hudson M.-S."/>
            <person name="Bidart J.-M."/>
            <person name="Schlumberger M."/>
            <person name="Virion A."/>
            <person name="Dupuy C."/>
        </authorList>
    </citation>
    <scope>SUBCELLULAR LOCATION</scope>
    <scope>TISSUE SPECIFICITY</scope>
</reference>
<reference key="11">
    <citation type="journal article" date="2005" name="J. Biol. Chem.">
        <title>Identification of a novel partner of duox: EFP1, a thioredoxin-related protein.</title>
        <authorList>
            <person name="Wang D."/>
            <person name="De Deken X."/>
            <person name="Milenkovic M."/>
            <person name="Song Y."/>
            <person name="Pirson I."/>
            <person name="Dumont J.E."/>
            <person name="Miot F."/>
        </authorList>
    </citation>
    <scope>INTERACTION WITH TXNDC11; TPO AND CYBA</scope>
</reference>
<reference key="12">
    <citation type="journal article" date="2005" name="J. Biol. Chem.">
        <title>Dual oxidase-2 has an intrinsic Ca2+-dependent H2O2-generating activity.</title>
        <authorList>
            <person name="Ameziane-El-Hassani R."/>
            <person name="Morand S."/>
            <person name="Boucher J.L."/>
            <person name="Frapart Y.-M."/>
            <person name="Apostolou D."/>
            <person name="Agnandji D."/>
            <person name="Gnidehou S."/>
            <person name="Ohayon R."/>
            <person name="Noel-Hudson M.-S."/>
            <person name="Francon J."/>
            <person name="Lalaoui K."/>
            <person name="Virion A."/>
            <person name="Dupuy C."/>
        </authorList>
    </citation>
    <scope>CATALYTIC ACTIVITY</scope>
    <scope>ACTIVITY REGULATION</scope>
</reference>
<reference key="13">
    <citation type="journal article" date="2005" name="Hum. Mutat.">
        <title>Persistent mild hypothyroidism associated with novel sequence variants of the DUOX2 gene in two siblings.</title>
        <authorList>
            <person name="Vigone M.C."/>
            <person name="Fugazzola L."/>
            <person name="Zamproni I."/>
            <person name="Passoni A."/>
            <person name="Di Candia S."/>
            <person name="Chiumello G."/>
            <person name="Persani L."/>
            <person name="Weber G."/>
        </authorList>
    </citation>
    <scope>VARIANT TDH6 TRP-376</scope>
</reference>
<reference key="14">
    <citation type="journal article" date="2006" name="Clin. Chem.">
        <title>Three mutations (p.Q36H, p.G418fsX482, and g.IVS19-2A--&gt;C) in the dual oxidase 2 gene responsible for congenital goiter and iodide organification defect.</title>
        <authorList>
            <person name="Varela V."/>
            <person name="Rivolta C.M."/>
            <person name="Esperante S.A."/>
            <person name="Gruneiro-Papendieck L."/>
            <person name="Chiesa A."/>
            <person name="Targovnik H.M."/>
        </authorList>
    </citation>
    <scope>VARIANT TDH6 HIS-36</scope>
</reference>
<reference key="15">
    <citation type="journal article" date="2015" name="Antioxid. Redox Signal.">
        <title>When an intramolecular disulfide bridge governs the interaction of DUOX2 with its partner DUOXA2.</title>
        <authorList>
            <person name="Carre A."/>
            <person name="Louzada R.A."/>
            <person name="Fortunato R.S."/>
            <person name="Ameziane-El-Hassani R."/>
            <person name="Morand S."/>
            <person name="Ogryzko V."/>
            <person name="de Carvalho D.P."/>
            <person name="Grasberger H."/>
            <person name="Leto T.L."/>
            <person name="Dupuy C."/>
        </authorList>
    </citation>
    <scope>SUBUNIT</scope>
    <scope>DISULFIDE BONDS</scope>
</reference>
<reference key="16">
    <citation type="journal article" date="2015" name="Cell. Mol. Gastroenterol. Hepatol.">
        <title>Defects in NADPH oxidase genes NOX1 and DUOX2 in very early onset inflammatory bowel disease.</title>
        <authorList>
            <person name="Hayes P."/>
            <person name="Dhillon S."/>
            <person name="O'Neill K."/>
            <person name="Thoeni C."/>
            <person name="Hui K.Y."/>
            <person name="Elkadri A."/>
            <person name="Guo C.H."/>
            <person name="Kovacic L."/>
            <person name="Aviello G."/>
            <person name="Alvarez L.A."/>
            <person name="Griffiths A.M."/>
            <person name="Snapper S.B."/>
            <person name="Brant S.R."/>
            <person name="Doroshow J.H."/>
            <person name="Silverberg M.S."/>
            <person name="Peter I."/>
            <person name="McGovern D.P."/>
            <person name="Cho J."/>
            <person name="Brumell J.H."/>
            <person name="Uhlig H.H."/>
            <person name="Bourke B."/>
            <person name="Muise A.A."/>
            <person name="Knaus U.G."/>
        </authorList>
    </citation>
    <scope>POSSIBLE INVOLVEMENT IN INFLAMMATORY BOWEL DISEASE</scope>
    <scope>VARIANTS CYS-1211 AND CYS-1492</scope>
    <scope>SUBCELLULAR LOCATION</scope>
</reference>
<gene>
    <name type="primary">DUOX2</name>
    <name type="synonym">LNOX2</name>
    <name type="synonym">THOX2</name>
</gene>
<organism>
    <name type="scientific">Homo sapiens</name>
    <name type="common">Human</name>
    <dbReference type="NCBI Taxonomy" id="9606"/>
    <lineage>
        <taxon>Eukaryota</taxon>
        <taxon>Metazoa</taxon>
        <taxon>Chordata</taxon>
        <taxon>Craniata</taxon>
        <taxon>Vertebrata</taxon>
        <taxon>Euteleostomi</taxon>
        <taxon>Mammalia</taxon>
        <taxon>Eutheria</taxon>
        <taxon>Euarchontoglires</taxon>
        <taxon>Primates</taxon>
        <taxon>Haplorrhini</taxon>
        <taxon>Catarrhini</taxon>
        <taxon>Hominidae</taxon>
        <taxon>Homo</taxon>
    </lineage>
</organism>
<comment type="function">
    <text evidence="11">Generates hydrogen peroxide which is required for the activity of thyroid peroxidase/TPO and lactoperoxidase/LPO. Plays a role in thyroid hormones synthesis and lactoperoxidase-mediated antimicrobial defense at the surface of mucosa. May have its own peroxidase activity through its N-terminal peroxidase-like domain.</text>
</comment>
<comment type="catalytic activity">
    <reaction evidence="15">
        <text>NADH + O2 + H(+) = H2O2 + NAD(+)</text>
        <dbReference type="Rhea" id="RHEA:11264"/>
        <dbReference type="ChEBI" id="CHEBI:15378"/>
        <dbReference type="ChEBI" id="CHEBI:15379"/>
        <dbReference type="ChEBI" id="CHEBI:16240"/>
        <dbReference type="ChEBI" id="CHEBI:57540"/>
        <dbReference type="ChEBI" id="CHEBI:57945"/>
        <dbReference type="EC" id="1.6.3.1"/>
    </reaction>
</comment>
<comment type="catalytic activity">
    <reaction evidence="15">
        <text>NADPH + O2 + H(+) = H2O2 + NADP(+)</text>
        <dbReference type="Rhea" id="RHEA:11260"/>
        <dbReference type="ChEBI" id="CHEBI:15378"/>
        <dbReference type="ChEBI" id="CHEBI:15379"/>
        <dbReference type="ChEBI" id="CHEBI:16240"/>
        <dbReference type="ChEBI" id="CHEBI:57783"/>
        <dbReference type="ChEBI" id="CHEBI:58349"/>
        <dbReference type="EC" id="1.6.3.1"/>
    </reaction>
</comment>
<comment type="activity regulation">
    <text evidence="1 15">Peroxidase activity is inhibited by aminobenzohydrazide (By similarity). The NADPH oxidase activity is calcium-dependent.</text>
</comment>
<comment type="pathway">
    <text>Hormone biosynthesis; thyroid hormone biosynthesis.</text>
</comment>
<comment type="subunit">
    <text evidence="13 19">Heterodimer with DUOXA2; disulfide-linked. Interacts with TXNDC11, TPO and CYBA.</text>
</comment>
<comment type="interaction">
    <interactant intactId="EBI-12740885">
        <id>Q9NRD8</id>
    </interactant>
    <interactant intactId="EBI-25589731">
        <id>Q1HG44</id>
        <label>DUOXA2</label>
    </interactant>
    <organismsDiffer>false</organismsDiffer>
    <experiments>5</experiments>
</comment>
<comment type="subcellular location">
    <subcellularLocation>
        <location evidence="14 20">Apical cell membrane</location>
        <topology evidence="14">Multi-pass membrane protein</topology>
    </subcellularLocation>
    <subcellularLocation>
        <location evidence="20">Cell junction</location>
    </subcellularLocation>
    <text evidence="20">Localizes to the apical membrane of epithelial cells. Localizes on internal membrane structures under resting conditions, translocates to the plasma membrane and cell-cell junctions upon challenge with enteric pathogens, such as Escherichia coli.</text>
</comment>
<comment type="tissue specificity">
    <text evidence="7 8 11 12 14">Expressed in colon, small intestine, duodenum and tracheal surface epithelial cells (at protein level). Expressed in thyrocytes. Also detected in kidney, liver, lung, pancreas, prostate, salivary glands, rectum and testis.</text>
</comment>
<comment type="developmental stage">
    <text evidence="8">Widely expressed in fetal tissues.</text>
</comment>
<comment type="induction">
    <text evidence="7">By forskolin, thyrotropin and the Th1-specific cytokine IFNG/IFN-gamma.</text>
</comment>
<comment type="PTM">
    <text evidence="9">N-glycosylated.</text>
</comment>
<comment type="disease" evidence="10 16 17 18">
    <disease id="DI-00361">
        <name>Thyroid dyshormonogenesis 6</name>
        <acronym>TDH6</acronym>
        <description>A disorder due to a defective conversion of accumulated iodide to organically bound iodine. The iodide organification defect can be partial or complete.</description>
        <dbReference type="MIM" id="607200"/>
    </disease>
    <text>The disease is caused by variants affecting the gene represented in this entry.</text>
</comment>
<comment type="disease">
    <text evidence="20">Defects in DUOX2 may play a role in the pathogenesis of very early onset inflammatory bowel disease (VEOIBD), a chronic, relapsing inflammation of the gastrointestinal tract with a complex etiology diagnosed before 6 years of age. VEOIBD is subdivided into Crohn disease and ulcerative colitis phenotypes. Crohn disease may affect any part of the gastrointestinal tract from the mouth to the anus, but the phenotype of children with onset of Crohn disease occurring younger than the age of 10 is predominantly colonic, with a lower risk of ileal disease. Bowel inflammation is transmural and discontinuous; it may contain granulomas or be associated with intestinal or perianal fistulas. In contrast, in ulcerative colitis, the inflammation is continuous and limited to rectal and colonic mucosal layers; fistulas and granulomas are not observed. Both diseases include extraintestinal inflammation of the skin, eyes, or joints.</text>
</comment>
<comment type="similarity">
    <text evidence="21">In the N-terminal section; belongs to the peroxidase family.</text>
</comment>
<protein>
    <recommendedName>
        <fullName>Dual oxidase 2</fullName>
        <ecNumber>1.11.1.-</ecNumber>
        <ecNumber>1.6.3.1</ecNumber>
    </recommendedName>
    <alternativeName>
        <fullName>Large NOX 2</fullName>
    </alternativeName>
    <alternativeName>
        <fullName>Long NOX 2</fullName>
    </alternativeName>
    <alternativeName>
        <fullName>NADH/NADPH thyroid oxidase p138-tox</fullName>
    </alternativeName>
    <alternativeName>
        <fullName>NADPH oxidase/peroxidase DUOX2</fullName>
    </alternativeName>
    <alternativeName>
        <fullName>NADPH thyroid oxidase 2</fullName>
    </alternativeName>
    <alternativeName>
        <fullName>Thyroid oxidase 2</fullName>
    </alternativeName>
    <alternativeName>
        <fullName>p138 thyroid oxidase</fullName>
    </alternativeName>
</protein>